<keyword id="KW-0963">Cytoplasm</keyword>
<keyword id="KW-0378">Hydrolase</keyword>
<keyword id="KW-0645">Protease</keyword>
<keyword id="KW-0720">Serine protease</keyword>
<evidence type="ECO:0000255" key="1">
    <source>
        <dbReference type="HAMAP-Rule" id="MF_00444"/>
    </source>
</evidence>
<reference key="1">
    <citation type="submission" date="2007-07" db="EMBL/GenBank/DDBJ databases">
        <title>Complete genome sequence of Campylobacter jejuni subsp doylei 269.97 isolated from human blood.</title>
        <authorList>
            <person name="Fouts D.E."/>
            <person name="Mongodin E.F."/>
            <person name="Puiu D."/>
            <person name="Sebastian Y."/>
            <person name="Miller W.G."/>
            <person name="Mandrell R.E."/>
            <person name="Lastovica A.J."/>
            <person name="Nelson K.E."/>
        </authorList>
    </citation>
    <scope>NUCLEOTIDE SEQUENCE [LARGE SCALE GENOMIC DNA]</scope>
    <source>
        <strain>ATCC BAA-1458 / RM4099 / 269.97</strain>
    </source>
</reference>
<sequence length="194" mass="21650">MFIPYVIEKSSRGERSYDIYSRLLKDRIIMLSGEIHDELAASIVAQLLFLEAEDPTKDIYLYINSPGGVITSGFSIYDTMNYIKPDVCTICIGQAASMGAFLLSCGAEGKRFALPNSRIMIHQPLGGARGQATDIEIQAKEILRLKTILNDILAKNTKQKVAKIAKDTERDFFMSAQEAKEYGLIDKVLEKSFK</sequence>
<gene>
    <name evidence="1" type="primary">clpP</name>
    <name type="ordered locus">JJD26997_0202</name>
</gene>
<protein>
    <recommendedName>
        <fullName evidence="1">ATP-dependent Clp protease proteolytic subunit</fullName>
        <ecNumber evidence="1">3.4.21.92</ecNumber>
    </recommendedName>
    <alternativeName>
        <fullName evidence="1">Endopeptidase Clp</fullName>
    </alternativeName>
</protein>
<comment type="function">
    <text evidence="1">Cleaves peptides in various proteins in a process that requires ATP hydrolysis. Has a chymotrypsin-like activity. Plays a major role in the degradation of misfolded proteins.</text>
</comment>
<comment type="catalytic activity">
    <reaction evidence="1">
        <text>Hydrolysis of proteins to small peptides in the presence of ATP and magnesium. alpha-casein is the usual test substrate. In the absence of ATP, only oligopeptides shorter than five residues are hydrolyzed (such as succinyl-Leu-Tyr-|-NHMec, and Leu-Tyr-Leu-|-Tyr-Trp, in which cleavage of the -Tyr-|-Leu- and -Tyr-|-Trp bonds also occurs).</text>
        <dbReference type="EC" id="3.4.21.92"/>
    </reaction>
</comment>
<comment type="subunit">
    <text evidence="1">Fourteen ClpP subunits assemble into 2 heptameric rings which stack back to back to give a disk-like structure with a central cavity, resembling the structure of eukaryotic proteasomes.</text>
</comment>
<comment type="subcellular location">
    <subcellularLocation>
        <location evidence="1">Cytoplasm</location>
    </subcellularLocation>
</comment>
<comment type="similarity">
    <text evidence="1">Belongs to the peptidase S14 family.</text>
</comment>
<dbReference type="EC" id="3.4.21.92" evidence="1"/>
<dbReference type="EMBL" id="CP000768">
    <property type="protein sequence ID" value="ABS43470.1"/>
    <property type="molecule type" value="Genomic_DNA"/>
</dbReference>
<dbReference type="SMR" id="A7H1R0"/>
<dbReference type="MEROPS" id="S14.001"/>
<dbReference type="KEGG" id="cjd:JJD26997_0202"/>
<dbReference type="HOGENOM" id="CLU_058707_3_2_7"/>
<dbReference type="Proteomes" id="UP000002302">
    <property type="component" value="Chromosome"/>
</dbReference>
<dbReference type="GO" id="GO:0005737">
    <property type="term" value="C:cytoplasm"/>
    <property type="evidence" value="ECO:0007669"/>
    <property type="project" value="UniProtKB-SubCell"/>
</dbReference>
<dbReference type="GO" id="GO:0009368">
    <property type="term" value="C:endopeptidase Clp complex"/>
    <property type="evidence" value="ECO:0007669"/>
    <property type="project" value="TreeGrafter"/>
</dbReference>
<dbReference type="GO" id="GO:0004176">
    <property type="term" value="F:ATP-dependent peptidase activity"/>
    <property type="evidence" value="ECO:0007669"/>
    <property type="project" value="InterPro"/>
</dbReference>
<dbReference type="GO" id="GO:0051117">
    <property type="term" value="F:ATPase binding"/>
    <property type="evidence" value="ECO:0007669"/>
    <property type="project" value="TreeGrafter"/>
</dbReference>
<dbReference type="GO" id="GO:0004252">
    <property type="term" value="F:serine-type endopeptidase activity"/>
    <property type="evidence" value="ECO:0007669"/>
    <property type="project" value="UniProtKB-UniRule"/>
</dbReference>
<dbReference type="GO" id="GO:0006515">
    <property type="term" value="P:protein quality control for misfolded or incompletely synthesized proteins"/>
    <property type="evidence" value="ECO:0007669"/>
    <property type="project" value="TreeGrafter"/>
</dbReference>
<dbReference type="CDD" id="cd07017">
    <property type="entry name" value="S14_ClpP_2"/>
    <property type="match status" value="1"/>
</dbReference>
<dbReference type="FunFam" id="3.90.226.10:FF:000001">
    <property type="entry name" value="ATP-dependent Clp protease proteolytic subunit"/>
    <property type="match status" value="1"/>
</dbReference>
<dbReference type="Gene3D" id="3.90.226.10">
    <property type="entry name" value="2-enoyl-CoA Hydratase, Chain A, domain 1"/>
    <property type="match status" value="1"/>
</dbReference>
<dbReference type="HAMAP" id="MF_00444">
    <property type="entry name" value="ClpP"/>
    <property type="match status" value="1"/>
</dbReference>
<dbReference type="InterPro" id="IPR001907">
    <property type="entry name" value="ClpP"/>
</dbReference>
<dbReference type="InterPro" id="IPR029045">
    <property type="entry name" value="ClpP/crotonase-like_dom_sf"/>
</dbReference>
<dbReference type="InterPro" id="IPR023562">
    <property type="entry name" value="ClpP/TepA"/>
</dbReference>
<dbReference type="InterPro" id="IPR033135">
    <property type="entry name" value="ClpP_His_AS"/>
</dbReference>
<dbReference type="InterPro" id="IPR018215">
    <property type="entry name" value="ClpP_Ser_AS"/>
</dbReference>
<dbReference type="NCBIfam" id="TIGR00493">
    <property type="entry name" value="clpP"/>
    <property type="match status" value="1"/>
</dbReference>
<dbReference type="NCBIfam" id="NF001368">
    <property type="entry name" value="PRK00277.1"/>
    <property type="match status" value="1"/>
</dbReference>
<dbReference type="NCBIfam" id="NF009205">
    <property type="entry name" value="PRK12553.1"/>
    <property type="match status" value="1"/>
</dbReference>
<dbReference type="PANTHER" id="PTHR10381">
    <property type="entry name" value="ATP-DEPENDENT CLP PROTEASE PROTEOLYTIC SUBUNIT"/>
    <property type="match status" value="1"/>
</dbReference>
<dbReference type="PANTHER" id="PTHR10381:SF70">
    <property type="entry name" value="ATP-DEPENDENT CLP PROTEASE PROTEOLYTIC SUBUNIT"/>
    <property type="match status" value="1"/>
</dbReference>
<dbReference type="Pfam" id="PF00574">
    <property type="entry name" value="CLP_protease"/>
    <property type="match status" value="1"/>
</dbReference>
<dbReference type="PRINTS" id="PR00127">
    <property type="entry name" value="CLPPROTEASEP"/>
</dbReference>
<dbReference type="SUPFAM" id="SSF52096">
    <property type="entry name" value="ClpP/crotonase"/>
    <property type="match status" value="1"/>
</dbReference>
<dbReference type="PROSITE" id="PS00382">
    <property type="entry name" value="CLP_PROTEASE_HIS"/>
    <property type="match status" value="1"/>
</dbReference>
<dbReference type="PROSITE" id="PS00381">
    <property type="entry name" value="CLP_PROTEASE_SER"/>
    <property type="match status" value="1"/>
</dbReference>
<feature type="chain" id="PRO_1000026078" description="ATP-dependent Clp protease proteolytic subunit">
    <location>
        <begin position="1"/>
        <end position="194"/>
    </location>
</feature>
<feature type="active site" description="Nucleophile" evidence="1">
    <location>
        <position position="97"/>
    </location>
</feature>
<feature type="active site" evidence="1">
    <location>
        <position position="122"/>
    </location>
</feature>
<proteinExistence type="inferred from homology"/>
<organism>
    <name type="scientific">Campylobacter jejuni subsp. doylei (strain ATCC BAA-1458 / RM4099 / 269.97)</name>
    <dbReference type="NCBI Taxonomy" id="360109"/>
    <lineage>
        <taxon>Bacteria</taxon>
        <taxon>Pseudomonadati</taxon>
        <taxon>Campylobacterota</taxon>
        <taxon>Epsilonproteobacteria</taxon>
        <taxon>Campylobacterales</taxon>
        <taxon>Campylobacteraceae</taxon>
        <taxon>Campylobacter</taxon>
    </lineage>
</organism>
<name>CLPP_CAMJD</name>
<accession>A7H1R0</accession>